<accession>B3Q607</accession>
<feature type="chain" id="PRO_0000389838" description="Acetyl-coenzyme A carboxylase carboxyl transferase subunit beta">
    <location>
        <begin position="1"/>
        <end position="327"/>
    </location>
</feature>
<feature type="domain" description="CoA carboxyltransferase N-terminal" evidence="2">
    <location>
        <begin position="24"/>
        <end position="293"/>
    </location>
</feature>
<feature type="region of interest" description="Disordered" evidence="3">
    <location>
        <begin position="293"/>
        <end position="327"/>
    </location>
</feature>
<feature type="compositionally biased region" description="Low complexity" evidence="3">
    <location>
        <begin position="293"/>
        <end position="311"/>
    </location>
</feature>
<feature type="compositionally biased region" description="Pro residues" evidence="3">
    <location>
        <begin position="312"/>
        <end position="327"/>
    </location>
</feature>
<reference key="1">
    <citation type="submission" date="2008-05" db="EMBL/GenBank/DDBJ databases">
        <title>Complete sequence of Rhodopseudomonas palustris TIE-1.</title>
        <authorList>
            <consortium name="US DOE Joint Genome Institute"/>
            <person name="Lucas S."/>
            <person name="Copeland A."/>
            <person name="Lapidus A."/>
            <person name="Glavina del Rio T."/>
            <person name="Dalin E."/>
            <person name="Tice H."/>
            <person name="Pitluck S."/>
            <person name="Chain P."/>
            <person name="Malfatti S."/>
            <person name="Shin M."/>
            <person name="Vergez L."/>
            <person name="Lang D."/>
            <person name="Schmutz J."/>
            <person name="Larimer F."/>
            <person name="Land M."/>
            <person name="Hauser L."/>
            <person name="Kyrpides N."/>
            <person name="Mikhailova N."/>
            <person name="Emerson D."/>
            <person name="Newman D.K."/>
            <person name="Roden E."/>
            <person name="Richardson P."/>
        </authorList>
    </citation>
    <scope>NUCLEOTIDE SEQUENCE [LARGE SCALE GENOMIC DNA]</scope>
    <source>
        <strain>TIE-1</strain>
    </source>
</reference>
<gene>
    <name evidence="1" type="primary">accD</name>
    <name type="ordered locus">Rpal_0074</name>
</gene>
<evidence type="ECO:0000255" key="1">
    <source>
        <dbReference type="HAMAP-Rule" id="MF_01395"/>
    </source>
</evidence>
<evidence type="ECO:0000255" key="2">
    <source>
        <dbReference type="PROSITE-ProRule" id="PRU01136"/>
    </source>
</evidence>
<evidence type="ECO:0000256" key="3">
    <source>
        <dbReference type="SAM" id="MobiDB-lite"/>
    </source>
</evidence>
<dbReference type="EC" id="2.1.3.15" evidence="1"/>
<dbReference type="EMBL" id="CP001096">
    <property type="protein sequence ID" value="ACE98636.1"/>
    <property type="molecule type" value="Genomic_DNA"/>
</dbReference>
<dbReference type="RefSeq" id="WP_012493901.1">
    <property type="nucleotide sequence ID" value="NC_011004.1"/>
</dbReference>
<dbReference type="SMR" id="B3Q607"/>
<dbReference type="KEGG" id="rpt:Rpal_0074"/>
<dbReference type="HOGENOM" id="CLU_015486_1_0_5"/>
<dbReference type="OrthoDB" id="9772975at2"/>
<dbReference type="UniPathway" id="UPA00655">
    <property type="reaction ID" value="UER00711"/>
</dbReference>
<dbReference type="Proteomes" id="UP000001725">
    <property type="component" value="Chromosome"/>
</dbReference>
<dbReference type="GO" id="GO:0009329">
    <property type="term" value="C:acetate CoA-transferase complex"/>
    <property type="evidence" value="ECO:0007669"/>
    <property type="project" value="TreeGrafter"/>
</dbReference>
<dbReference type="GO" id="GO:0003989">
    <property type="term" value="F:acetyl-CoA carboxylase activity"/>
    <property type="evidence" value="ECO:0007669"/>
    <property type="project" value="InterPro"/>
</dbReference>
<dbReference type="GO" id="GO:0005524">
    <property type="term" value="F:ATP binding"/>
    <property type="evidence" value="ECO:0007669"/>
    <property type="project" value="UniProtKB-KW"/>
</dbReference>
<dbReference type="GO" id="GO:0016743">
    <property type="term" value="F:carboxyl- or carbamoyltransferase activity"/>
    <property type="evidence" value="ECO:0007669"/>
    <property type="project" value="UniProtKB-UniRule"/>
</dbReference>
<dbReference type="GO" id="GO:0006633">
    <property type="term" value="P:fatty acid biosynthetic process"/>
    <property type="evidence" value="ECO:0007669"/>
    <property type="project" value="UniProtKB-KW"/>
</dbReference>
<dbReference type="GO" id="GO:2001295">
    <property type="term" value="P:malonyl-CoA biosynthetic process"/>
    <property type="evidence" value="ECO:0007669"/>
    <property type="project" value="UniProtKB-UniRule"/>
</dbReference>
<dbReference type="Gene3D" id="3.90.226.10">
    <property type="entry name" value="2-enoyl-CoA Hydratase, Chain A, domain 1"/>
    <property type="match status" value="1"/>
</dbReference>
<dbReference type="HAMAP" id="MF_01395">
    <property type="entry name" value="AcetylCoA_CT_beta"/>
    <property type="match status" value="1"/>
</dbReference>
<dbReference type="InterPro" id="IPR034733">
    <property type="entry name" value="AcCoA_carboxyl_beta"/>
</dbReference>
<dbReference type="InterPro" id="IPR000438">
    <property type="entry name" value="Acetyl_CoA_COase_Trfase_b_su"/>
</dbReference>
<dbReference type="InterPro" id="IPR029045">
    <property type="entry name" value="ClpP/crotonase-like_dom_sf"/>
</dbReference>
<dbReference type="InterPro" id="IPR011762">
    <property type="entry name" value="COA_CT_N"/>
</dbReference>
<dbReference type="NCBIfam" id="TIGR00515">
    <property type="entry name" value="accD"/>
    <property type="match status" value="1"/>
</dbReference>
<dbReference type="PANTHER" id="PTHR42995">
    <property type="entry name" value="ACETYL-COENZYME A CARBOXYLASE CARBOXYL TRANSFERASE SUBUNIT BETA, CHLOROPLASTIC"/>
    <property type="match status" value="1"/>
</dbReference>
<dbReference type="PANTHER" id="PTHR42995:SF5">
    <property type="entry name" value="ACETYL-COENZYME A CARBOXYLASE CARBOXYL TRANSFERASE SUBUNIT BETA, CHLOROPLASTIC"/>
    <property type="match status" value="1"/>
</dbReference>
<dbReference type="Pfam" id="PF01039">
    <property type="entry name" value="Carboxyl_trans"/>
    <property type="match status" value="1"/>
</dbReference>
<dbReference type="PRINTS" id="PR01070">
    <property type="entry name" value="ACCCTRFRASEB"/>
</dbReference>
<dbReference type="SUPFAM" id="SSF52096">
    <property type="entry name" value="ClpP/crotonase"/>
    <property type="match status" value="1"/>
</dbReference>
<dbReference type="PROSITE" id="PS50980">
    <property type="entry name" value="COA_CT_NTER"/>
    <property type="match status" value="1"/>
</dbReference>
<comment type="function">
    <text evidence="1">Component of the acetyl coenzyme A carboxylase (ACC) complex. Biotin carboxylase (BC) catalyzes the carboxylation of biotin on its carrier protein (BCCP) and then the CO(2) group is transferred by the transcarboxylase to acetyl-CoA to form malonyl-CoA.</text>
</comment>
<comment type="catalytic activity">
    <reaction evidence="1">
        <text>N(6)-carboxybiotinyl-L-lysyl-[protein] + acetyl-CoA = N(6)-biotinyl-L-lysyl-[protein] + malonyl-CoA</text>
        <dbReference type="Rhea" id="RHEA:54728"/>
        <dbReference type="Rhea" id="RHEA-COMP:10505"/>
        <dbReference type="Rhea" id="RHEA-COMP:10506"/>
        <dbReference type="ChEBI" id="CHEBI:57288"/>
        <dbReference type="ChEBI" id="CHEBI:57384"/>
        <dbReference type="ChEBI" id="CHEBI:83144"/>
        <dbReference type="ChEBI" id="CHEBI:83145"/>
        <dbReference type="EC" id="2.1.3.15"/>
    </reaction>
</comment>
<comment type="pathway">
    <text evidence="1">Lipid metabolism; malonyl-CoA biosynthesis; malonyl-CoA from acetyl-CoA: step 1/1.</text>
</comment>
<comment type="subunit">
    <text evidence="1">Acetyl-CoA carboxylase is a heterohexamer composed of biotin carboxyl carrier protein (AccB), biotin carboxylase (AccC) and two subunits each of ACCase subunit alpha (AccA) and ACCase subunit beta (AccD).</text>
</comment>
<comment type="subcellular location">
    <subcellularLocation>
        <location evidence="1">Cytoplasm</location>
    </subcellularLocation>
</comment>
<comment type="similarity">
    <text evidence="1">Belongs to the AccD/PCCB family.</text>
</comment>
<name>ACCD_RHOPT</name>
<protein>
    <recommendedName>
        <fullName evidence="1">Acetyl-coenzyme A carboxylase carboxyl transferase subunit beta</fullName>
        <shortName evidence="1">ACCase subunit beta</shortName>
        <shortName evidence="1">Acetyl-CoA carboxylase carboxyltransferase subunit beta</shortName>
        <ecNumber evidence="1">2.1.3.15</ecNumber>
    </recommendedName>
</protein>
<organism>
    <name type="scientific">Rhodopseudomonas palustris (strain TIE-1)</name>
    <dbReference type="NCBI Taxonomy" id="395960"/>
    <lineage>
        <taxon>Bacteria</taxon>
        <taxon>Pseudomonadati</taxon>
        <taxon>Pseudomonadota</taxon>
        <taxon>Alphaproteobacteria</taxon>
        <taxon>Hyphomicrobiales</taxon>
        <taxon>Nitrobacteraceae</taxon>
        <taxon>Rhodopseudomonas</taxon>
    </lineage>
</organism>
<sequence>MNWLTNVVRPKIRNILRRETPENLWIKCPDTGQLVFYKDVEQNQFVIPGSNYHMRMGAVARLRAIFDNETWYDVALPEVVADPLKFRDERKYADRIKDARTKTGAHDAVRVGFGKLETSPVVVAVQDFDFMGGSLGMAAGEAIIRGMELAVEKHAPFIMFAASGGARMQEGILSLMQMPRTTVAVQMLREAKLPYIVVLTNPTTGGVTASYAMLGDIHIAEPGALIGFAGARVIEQTIREKLPDGFQRAEYLKEHGMVDMVVHRHDLRPTLARLCRLLTKSPALTVTTAVEAPAEAAAKAEPEATTTEQPVAPAPTEPPAQPAAPQA</sequence>
<proteinExistence type="inferred from homology"/>
<keyword id="KW-0067">ATP-binding</keyword>
<keyword id="KW-0963">Cytoplasm</keyword>
<keyword id="KW-0275">Fatty acid biosynthesis</keyword>
<keyword id="KW-0276">Fatty acid metabolism</keyword>
<keyword id="KW-0444">Lipid biosynthesis</keyword>
<keyword id="KW-0443">Lipid metabolism</keyword>
<keyword id="KW-0547">Nucleotide-binding</keyword>
<keyword id="KW-0808">Transferase</keyword>